<keyword id="KW-0963">Cytoplasm</keyword>
<keyword id="KW-0444">Lipid biosynthesis</keyword>
<keyword id="KW-0443">Lipid metabolism</keyword>
<keyword id="KW-0520">NAD</keyword>
<keyword id="KW-0521">NADP</keyword>
<keyword id="KW-0547">Nucleotide-binding</keyword>
<keyword id="KW-0560">Oxidoreductase</keyword>
<keyword id="KW-0594">Phospholipid biosynthesis</keyword>
<keyword id="KW-1208">Phospholipid metabolism</keyword>
<keyword id="KW-1185">Reference proteome</keyword>
<organism>
    <name type="scientific">Halalkalibacterium halodurans (strain ATCC BAA-125 / DSM 18197 / FERM 7344 / JCM 9153 / C-125)</name>
    <name type="common">Bacillus halodurans</name>
    <dbReference type="NCBI Taxonomy" id="272558"/>
    <lineage>
        <taxon>Bacteria</taxon>
        <taxon>Bacillati</taxon>
        <taxon>Bacillota</taxon>
        <taxon>Bacilli</taxon>
        <taxon>Bacillales</taxon>
        <taxon>Bacillaceae</taxon>
        <taxon>Halalkalibacterium (ex Joshi et al. 2022)</taxon>
    </lineage>
</organism>
<accession>Q9KCD2</accession>
<feature type="chain" id="PRO_0000137923" description="Glycerol-3-phosphate dehydrogenase [NAD(P)+]">
    <location>
        <begin position="1"/>
        <end position="345"/>
    </location>
</feature>
<feature type="active site" description="Proton acceptor" evidence="1">
    <location>
        <position position="191"/>
    </location>
</feature>
<feature type="binding site" evidence="1">
    <location>
        <position position="11"/>
    </location>
    <ligand>
        <name>NADPH</name>
        <dbReference type="ChEBI" id="CHEBI:57783"/>
    </ligand>
</feature>
<feature type="binding site" evidence="1">
    <location>
        <position position="12"/>
    </location>
    <ligand>
        <name>NADPH</name>
        <dbReference type="ChEBI" id="CHEBI:57783"/>
    </ligand>
</feature>
<feature type="binding site" evidence="1">
    <location>
        <position position="32"/>
    </location>
    <ligand>
        <name>NADPH</name>
        <dbReference type="ChEBI" id="CHEBI:57783"/>
    </ligand>
</feature>
<feature type="binding site" evidence="1">
    <location>
        <position position="33"/>
    </location>
    <ligand>
        <name>NADPH</name>
        <dbReference type="ChEBI" id="CHEBI:57783"/>
    </ligand>
</feature>
<feature type="binding site" evidence="1">
    <location>
        <position position="105"/>
    </location>
    <ligand>
        <name>NADPH</name>
        <dbReference type="ChEBI" id="CHEBI:57783"/>
    </ligand>
</feature>
<feature type="binding site" evidence="1">
    <location>
        <position position="105"/>
    </location>
    <ligand>
        <name>sn-glycerol 3-phosphate</name>
        <dbReference type="ChEBI" id="CHEBI:57597"/>
    </ligand>
</feature>
<feature type="binding site" evidence="1">
    <location>
        <position position="136"/>
    </location>
    <ligand>
        <name>sn-glycerol 3-phosphate</name>
        <dbReference type="ChEBI" id="CHEBI:57597"/>
    </ligand>
</feature>
<feature type="binding site" evidence="1">
    <location>
        <position position="138"/>
    </location>
    <ligand>
        <name>sn-glycerol 3-phosphate</name>
        <dbReference type="ChEBI" id="CHEBI:57597"/>
    </ligand>
</feature>
<feature type="binding site" evidence="1">
    <location>
        <position position="140"/>
    </location>
    <ligand>
        <name>NADPH</name>
        <dbReference type="ChEBI" id="CHEBI:57783"/>
    </ligand>
</feature>
<feature type="binding site" evidence="1">
    <location>
        <position position="191"/>
    </location>
    <ligand>
        <name>sn-glycerol 3-phosphate</name>
        <dbReference type="ChEBI" id="CHEBI:57597"/>
    </ligand>
</feature>
<feature type="binding site" evidence="1">
    <location>
        <position position="244"/>
    </location>
    <ligand>
        <name>sn-glycerol 3-phosphate</name>
        <dbReference type="ChEBI" id="CHEBI:57597"/>
    </ligand>
</feature>
<feature type="binding site" evidence="1">
    <location>
        <position position="254"/>
    </location>
    <ligand>
        <name>sn-glycerol 3-phosphate</name>
        <dbReference type="ChEBI" id="CHEBI:57597"/>
    </ligand>
</feature>
<feature type="binding site" evidence="1">
    <location>
        <position position="255"/>
    </location>
    <ligand>
        <name>NADPH</name>
        <dbReference type="ChEBI" id="CHEBI:57783"/>
    </ligand>
</feature>
<feature type="binding site" evidence="1">
    <location>
        <position position="255"/>
    </location>
    <ligand>
        <name>sn-glycerol 3-phosphate</name>
        <dbReference type="ChEBI" id="CHEBI:57597"/>
    </ligand>
</feature>
<feature type="binding site" evidence="1">
    <location>
        <position position="256"/>
    </location>
    <ligand>
        <name>sn-glycerol 3-phosphate</name>
        <dbReference type="ChEBI" id="CHEBI:57597"/>
    </ligand>
</feature>
<feature type="binding site" evidence="1">
    <location>
        <position position="279"/>
    </location>
    <ligand>
        <name>NADPH</name>
        <dbReference type="ChEBI" id="CHEBI:57783"/>
    </ligand>
</feature>
<feature type="binding site" evidence="1">
    <location>
        <position position="281"/>
    </location>
    <ligand>
        <name>NADPH</name>
        <dbReference type="ChEBI" id="CHEBI:57783"/>
    </ligand>
</feature>
<comment type="function">
    <text evidence="1">Catalyzes the reduction of the glycolytic intermediate dihydroxyacetone phosphate (DHAP) to sn-glycerol 3-phosphate (G3P), the key precursor for phospholipid synthesis.</text>
</comment>
<comment type="catalytic activity">
    <reaction evidence="1">
        <text>sn-glycerol 3-phosphate + NAD(+) = dihydroxyacetone phosphate + NADH + H(+)</text>
        <dbReference type="Rhea" id="RHEA:11092"/>
        <dbReference type="ChEBI" id="CHEBI:15378"/>
        <dbReference type="ChEBI" id="CHEBI:57540"/>
        <dbReference type="ChEBI" id="CHEBI:57597"/>
        <dbReference type="ChEBI" id="CHEBI:57642"/>
        <dbReference type="ChEBI" id="CHEBI:57945"/>
        <dbReference type="EC" id="1.1.1.94"/>
    </reaction>
    <physiologicalReaction direction="right-to-left" evidence="1">
        <dbReference type="Rhea" id="RHEA:11094"/>
    </physiologicalReaction>
</comment>
<comment type="catalytic activity">
    <reaction evidence="1">
        <text>sn-glycerol 3-phosphate + NADP(+) = dihydroxyacetone phosphate + NADPH + H(+)</text>
        <dbReference type="Rhea" id="RHEA:11096"/>
        <dbReference type="ChEBI" id="CHEBI:15378"/>
        <dbReference type="ChEBI" id="CHEBI:57597"/>
        <dbReference type="ChEBI" id="CHEBI:57642"/>
        <dbReference type="ChEBI" id="CHEBI:57783"/>
        <dbReference type="ChEBI" id="CHEBI:58349"/>
        <dbReference type="EC" id="1.1.1.94"/>
    </reaction>
    <physiologicalReaction direction="right-to-left" evidence="1">
        <dbReference type="Rhea" id="RHEA:11098"/>
    </physiologicalReaction>
</comment>
<comment type="pathway">
    <text evidence="1">Membrane lipid metabolism; glycerophospholipid metabolism.</text>
</comment>
<comment type="subcellular location">
    <subcellularLocation>
        <location evidence="1">Cytoplasm</location>
    </subcellularLocation>
</comment>
<comment type="similarity">
    <text evidence="1">Belongs to the NAD-dependent glycerol-3-phosphate dehydrogenase family.</text>
</comment>
<sequence>MKNVAVIGAGSWGTALSLVLADNGHHVTLVARREEIAREINERHTNETYLPSIEIPSSIVATCSMEEIIDVEIIVLVVPTKAIRQAVRSLNDVLKWPVTIVHASKGIEPGSHLRISEMIEEELEPTLLKEVVVLSGPSHAEEVSLRQPTTVTVSSKSLSTTKQIQDLFMNQQFRVYTNEDLIGVEIGGALKNIIALACGLTNGLGYGDNTKAAIMTRGLAEIGRLGVKLGASPLTFAGLSGLGDLIVTCTSIHSRNWRAGQMLGKGKSPAEVEESMGMVVEGIRTTQAAHELAQKLQIEMPITSALYSVLFEGKKPEHAADELMGRVKKHEMENLHDVVSDQKND</sequence>
<dbReference type="EC" id="1.1.1.94" evidence="1"/>
<dbReference type="EMBL" id="BA000004">
    <property type="protein sequence ID" value="BAB05359.1"/>
    <property type="molecule type" value="Genomic_DNA"/>
</dbReference>
<dbReference type="PIR" id="H83854">
    <property type="entry name" value="H83854"/>
</dbReference>
<dbReference type="RefSeq" id="WP_010897803.1">
    <property type="nucleotide sequence ID" value="NC_002570.2"/>
</dbReference>
<dbReference type="SMR" id="Q9KCD2"/>
<dbReference type="STRING" id="272558.gene:10727538"/>
<dbReference type="KEGG" id="bha:BH1640"/>
<dbReference type="eggNOG" id="COG0240">
    <property type="taxonomic scope" value="Bacteria"/>
</dbReference>
<dbReference type="HOGENOM" id="CLU_033449_0_2_9"/>
<dbReference type="OrthoDB" id="9812273at2"/>
<dbReference type="UniPathway" id="UPA00940"/>
<dbReference type="Proteomes" id="UP000001258">
    <property type="component" value="Chromosome"/>
</dbReference>
<dbReference type="GO" id="GO:0005829">
    <property type="term" value="C:cytosol"/>
    <property type="evidence" value="ECO:0007669"/>
    <property type="project" value="TreeGrafter"/>
</dbReference>
<dbReference type="GO" id="GO:0047952">
    <property type="term" value="F:glycerol-3-phosphate dehydrogenase [NAD(P)+] activity"/>
    <property type="evidence" value="ECO:0007669"/>
    <property type="project" value="UniProtKB-UniRule"/>
</dbReference>
<dbReference type="GO" id="GO:0051287">
    <property type="term" value="F:NAD binding"/>
    <property type="evidence" value="ECO:0007669"/>
    <property type="project" value="InterPro"/>
</dbReference>
<dbReference type="GO" id="GO:0005975">
    <property type="term" value="P:carbohydrate metabolic process"/>
    <property type="evidence" value="ECO:0007669"/>
    <property type="project" value="InterPro"/>
</dbReference>
<dbReference type="GO" id="GO:0046167">
    <property type="term" value="P:glycerol-3-phosphate biosynthetic process"/>
    <property type="evidence" value="ECO:0007669"/>
    <property type="project" value="UniProtKB-UniRule"/>
</dbReference>
<dbReference type="GO" id="GO:0046168">
    <property type="term" value="P:glycerol-3-phosphate catabolic process"/>
    <property type="evidence" value="ECO:0007669"/>
    <property type="project" value="InterPro"/>
</dbReference>
<dbReference type="GO" id="GO:0006650">
    <property type="term" value="P:glycerophospholipid metabolic process"/>
    <property type="evidence" value="ECO:0007669"/>
    <property type="project" value="UniProtKB-UniRule"/>
</dbReference>
<dbReference type="GO" id="GO:0008654">
    <property type="term" value="P:phospholipid biosynthetic process"/>
    <property type="evidence" value="ECO:0007669"/>
    <property type="project" value="UniProtKB-KW"/>
</dbReference>
<dbReference type="FunFam" id="1.10.1040.10:FF:000001">
    <property type="entry name" value="Glycerol-3-phosphate dehydrogenase [NAD(P)+]"/>
    <property type="match status" value="1"/>
</dbReference>
<dbReference type="FunFam" id="3.40.50.720:FF:000019">
    <property type="entry name" value="Glycerol-3-phosphate dehydrogenase [NAD(P)+]"/>
    <property type="match status" value="1"/>
</dbReference>
<dbReference type="Gene3D" id="1.10.1040.10">
    <property type="entry name" value="N-(1-d-carboxylethyl)-l-norvaline Dehydrogenase, domain 2"/>
    <property type="match status" value="1"/>
</dbReference>
<dbReference type="Gene3D" id="3.40.50.720">
    <property type="entry name" value="NAD(P)-binding Rossmann-like Domain"/>
    <property type="match status" value="1"/>
</dbReference>
<dbReference type="HAMAP" id="MF_00394">
    <property type="entry name" value="NAD_Glyc3P_dehydrog"/>
    <property type="match status" value="1"/>
</dbReference>
<dbReference type="InterPro" id="IPR008927">
    <property type="entry name" value="6-PGluconate_DH-like_C_sf"/>
</dbReference>
<dbReference type="InterPro" id="IPR013328">
    <property type="entry name" value="6PGD_dom2"/>
</dbReference>
<dbReference type="InterPro" id="IPR006168">
    <property type="entry name" value="G3P_DH_NAD-dep"/>
</dbReference>
<dbReference type="InterPro" id="IPR006109">
    <property type="entry name" value="G3P_DH_NAD-dep_C"/>
</dbReference>
<dbReference type="InterPro" id="IPR011128">
    <property type="entry name" value="G3P_DH_NAD-dep_N"/>
</dbReference>
<dbReference type="InterPro" id="IPR036291">
    <property type="entry name" value="NAD(P)-bd_dom_sf"/>
</dbReference>
<dbReference type="NCBIfam" id="NF000940">
    <property type="entry name" value="PRK00094.1-2"/>
    <property type="match status" value="1"/>
</dbReference>
<dbReference type="NCBIfam" id="NF000941">
    <property type="entry name" value="PRK00094.1-3"/>
    <property type="match status" value="1"/>
</dbReference>
<dbReference type="NCBIfam" id="NF000942">
    <property type="entry name" value="PRK00094.1-4"/>
    <property type="match status" value="1"/>
</dbReference>
<dbReference type="PANTHER" id="PTHR11728">
    <property type="entry name" value="GLYCEROL-3-PHOSPHATE DEHYDROGENASE"/>
    <property type="match status" value="1"/>
</dbReference>
<dbReference type="PANTHER" id="PTHR11728:SF1">
    <property type="entry name" value="GLYCEROL-3-PHOSPHATE DEHYDROGENASE [NAD(+)] 2, CHLOROPLASTIC"/>
    <property type="match status" value="1"/>
</dbReference>
<dbReference type="Pfam" id="PF07479">
    <property type="entry name" value="NAD_Gly3P_dh_C"/>
    <property type="match status" value="1"/>
</dbReference>
<dbReference type="Pfam" id="PF01210">
    <property type="entry name" value="NAD_Gly3P_dh_N"/>
    <property type="match status" value="1"/>
</dbReference>
<dbReference type="PIRSF" id="PIRSF000114">
    <property type="entry name" value="Glycerol-3-P_dh"/>
    <property type="match status" value="1"/>
</dbReference>
<dbReference type="PRINTS" id="PR00077">
    <property type="entry name" value="GPDHDRGNASE"/>
</dbReference>
<dbReference type="SUPFAM" id="SSF48179">
    <property type="entry name" value="6-phosphogluconate dehydrogenase C-terminal domain-like"/>
    <property type="match status" value="1"/>
</dbReference>
<dbReference type="SUPFAM" id="SSF51735">
    <property type="entry name" value="NAD(P)-binding Rossmann-fold domains"/>
    <property type="match status" value="1"/>
</dbReference>
<dbReference type="PROSITE" id="PS00957">
    <property type="entry name" value="NAD_G3PDH"/>
    <property type="match status" value="1"/>
</dbReference>
<protein>
    <recommendedName>
        <fullName evidence="1">Glycerol-3-phosphate dehydrogenase [NAD(P)+]</fullName>
        <ecNumber evidence="1">1.1.1.94</ecNumber>
    </recommendedName>
    <alternativeName>
        <fullName evidence="1">NAD(P)(+)-dependent glycerol-3-phosphate dehydrogenase</fullName>
    </alternativeName>
    <alternativeName>
        <fullName evidence="1">NAD(P)H-dependent dihydroxyacetone-phosphate reductase</fullName>
    </alternativeName>
</protein>
<reference key="1">
    <citation type="journal article" date="2000" name="Nucleic Acids Res.">
        <title>Complete genome sequence of the alkaliphilic bacterium Bacillus halodurans and genomic sequence comparison with Bacillus subtilis.</title>
        <authorList>
            <person name="Takami H."/>
            <person name="Nakasone K."/>
            <person name="Takaki Y."/>
            <person name="Maeno G."/>
            <person name="Sasaki R."/>
            <person name="Masui N."/>
            <person name="Fuji F."/>
            <person name="Hirama C."/>
            <person name="Nakamura Y."/>
            <person name="Ogasawara N."/>
            <person name="Kuhara S."/>
            <person name="Horikoshi K."/>
        </authorList>
    </citation>
    <scope>NUCLEOTIDE SEQUENCE [LARGE SCALE GENOMIC DNA]</scope>
    <source>
        <strain>ATCC BAA-125 / DSM 18197 / FERM 7344 / JCM 9153 / C-125</strain>
    </source>
</reference>
<proteinExistence type="inferred from homology"/>
<gene>
    <name evidence="1" type="primary">gpsA</name>
    <name type="ordered locus">BH1640</name>
</gene>
<evidence type="ECO:0000255" key="1">
    <source>
        <dbReference type="HAMAP-Rule" id="MF_00394"/>
    </source>
</evidence>
<name>GPDA_HALH5</name>